<dbReference type="EC" id="2.7.1.21" evidence="1"/>
<dbReference type="EMBL" id="AE000513">
    <property type="protein sequence ID" value="AAF11536.1"/>
    <property type="molecule type" value="Genomic_DNA"/>
</dbReference>
<dbReference type="PIR" id="C75330">
    <property type="entry name" value="C75330"/>
</dbReference>
<dbReference type="RefSeq" id="NP_295707.1">
    <property type="nucleotide sequence ID" value="NC_001263.1"/>
</dbReference>
<dbReference type="RefSeq" id="WP_010888617.1">
    <property type="nucleotide sequence ID" value="NC_001263.1"/>
</dbReference>
<dbReference type="SMR" id="Q9RSY5"/>
<dbReference type="FunCoup" id="Q9RSY5">
    <property type="interactions" value="216"/>
</dbReference>
<dbReference type="STRING" id="243230.DR_1984"/>
<dbReference type="PaxDb" id="243230-DR_1984"/>
<dbReference type="EnsemblBacteria" id="AAF11536">
    <property type="protein sequence ID" value="AAF11536"/>
    <property type="gene ID" value="DR_1984"/>
</dbReference>
<dbReference type="KEGG" id="dra:DR_1984"/>
<dbReference type="PATRIC" id="fig|243230.17.peg.2207"/>
<dbReference type="eggNOG" id="COG1435">
    <property type="taxonomic scope" value="Bacteria"/>
</dbReference>
<dbReference type="HOGENOM" id="CLU_064400_3_0_0"/>
<dbReference type="InParanoid" id="Q9RSY5"/>
<dbReference type="OrthoDB" id="9781579at2"/>
<dbReference type="BRENDA" id="2.7.1.21">
    <property type="organism ID" value="1856"/>
</dbReference>
<dbReference type="Proteomes" id="UP000002524">
    <property type="component" value="Chromosome 1"/>
</dbReference>
<dbReference type="GO" id="GO:0005829">
    <property type="term" value="C:cytosol"/>
    <property type="evidence" value="ECO:0000318"/>
    <property type="project" value="GO_Central"/>
</dbReference>
<dbReference type="GO" id="GO:0005524">
    <property type="term" value="F:ATP binding"/>
    <property type="evidence" value="ECO:0007669"/>
    <property type="project" value="UniProtKB-UniRule"/>
</dbReference>
<dbReference type="GO" id="GO:0004797">
    <property type="term" value="F:thymidine kinase activity"/>
    <property type="evidence" value="ECO:0000318"/>
    <property type="project" value="GO_Central"/>
</dbReference>
<dbReference type="GO" id="GO:0071897">
    <property type="term" value="P:DNA biosynthetic process"/>
    <property type="evidence" value="ECO:0007669"/>
    <property type="project" value="UniProtKB-KW"/>
</dbReference>
<dbReference type="GO" id="GO:0046104">
    <property type="term" value="P:thymidine metabolic process"/>
    <property type="evidence" value="ECO:0000318"/>
    <property type="project" value="GO_Central"/>
</dbReference>
<dbReference type="FunFam" id="3.40.50.300:FF:000384">
    <property type="entry name" value="Thymidine kinase"/>
    <property type="match status" value="1"/>
</dbReference>
<dbReference type="Gene3D" id="3.30.60.20">
    <property type="match status" value="1"/>
</dbReference>
<dbReference type="Gene3D" id="3.40.50.300">
    <property type="entry name" value="P-loop containing nucleotide triphosphate hydrolases"/>
    <property type="match status" value="1"/>
</dbReference>
<dbReference type="HAMAP" id="MF_00124">
    <property type="entry name" value="Thymidine_kinase"/>
    <property type="match status" value="1"/>
</dbReference>
<dbReference type="InterPro" id="IPR027417">
    <property type="entry name" value="P-loop_NTPase"/>
</dbReference>
<dbReference type="InterPro" id="IPR001267">
    <property type="entry name" value="Thymidine_kinase"/>
</dbReference>
<dbReference type="NCBIfam" id="NF003296">
    <property type="entry name" value="PRK04296.1-1"/>
    <property type="match status" value="1"/>
</dbReference>
<dbReference type="PANTHER" id="PTHR11441">
    <property type="entry name" value="THYMIDINE KINASE"/>
    <property type="match status" value="1"/>
</dbReference>
<dbReference type="PANTHER" id="PTHR11441:SF0">
    <property type="entry name" value="THYMIDINE KINASE, CYTOSOLIC"/>
    <property type="match status" value="1"/>
</dbReference>
<dbReference type="Pfam" id="PF00265">
    <property type="entry name" value="TK"/>
    <property type="match status" value="1"/>
</dbReference>
<dbReference type="PIRSF" id="PIRSF035805">
    <property type="entry name" value="TK_cell"/>
    <property type="match status" value="1"/>
</dbReference>
<dbReference type="SUPFAM" id="SSF57716">
    <property type="entry name" value="Glucocorticoid receptor-like (DNA-binding domain)"/>
    <property type="match status" value="1"/>
</dbReference>
<dbReference type="SUPFAM" id="SSF52540">
    <property type="entry name" value="P-loop containing nucleoside triphosphate hydrolases"/>
    <property type="match status" value="1"/>
</dbReference>
<protein>
    <recommendedName>
        <fullName evidence="1">Thymidine kinase</fullName>
        <ecNumber evidence="1">2.7.1.21</ecNumber>
    </recommendedName>
</protein>
<proteinExistence type="inferred from homology"/>
<comment type="catalytic activity">
    <reaction evidence="1">
        <text>thymidine + ATP = dTMP + ADP + H(+)</text>
        <dbReference type="Rhea" id="RHEA:19129"/>
        <dbReference type="ChEBI" id="CHEBI:15378"/>
        <dbReference type="ChEBI" id="CHEBI:17748"/>
        <dbReference type="ChEBI" id="CHEBI:30616"/>
        <dbReference type="ChEBI" id="CHEBI:63528"/>
        <dbReference type="ChEBI" id="CHEBI:456216"/>
        <dbReference type="EC" id="2.7.1.21"/>
    </reaction>
</comment>
<comment type="subunit">
    <text evidence="1">Homotetramer.</text>
</comment>
<comment type="subcellular location">
    <subcellularLocation>
        <location evidence="1">Cytoplasm</location>
    </subcellularLocation>
</comment>
<comment type="similarity">
    <text evidence="1">Belongs to the thymidine kinase family.</text>
</comment>
<name>KITH_DEIRA</name>
<organism>
    <name type="scientific">Deinococcus radiodurans (strain ATCC 13939 / DSM 20539 / JCM 16871 / CCUG 27074 / LMG 4051 / NBRC 15346 / NCIMB 9279 / VKM B-1422 / R1)</name>
    <dbReference type="NCBI Taxonomy" id="243230"/>
    <lineage>
        <taxon>Bacteria</taxon>
        <taxon>Thermotogati</taxon>
        <taxon>Deinococcota</taxon>
        <taxon>Deinococci</taxon>
        <taxon>Deinococcales</taxon>
        <taxon>Deinococcaceae</taxon>
        <taxon>Deinococcus</taxon>
    </lineage>
</organism>
<reference key="1">
    <citation type="journal article" date="1999" name="Science">
        <title>Genome sequence of the radioresistant bacterium Deinococcus radiodurans R1.</title>
        <authorList>
            <person name="White O."/>
            <person name="Eisen J.A."/>
            <person name="Heidelberg J.F."/>
            <person name="Hickey E.K."/>
            <person name="Peterson J.D."/>
            <person name="Dodson R.J."/>
            <person name="Haft D.H."/>
            <person name="Gwinn M.L."/>
            <person name="Nelson W.C."/>
            <person name="Richardson D.L."/>
            <person name="Moffat K.S."/>
            <person name="Qin H."/>
            <person name="Jiang L."/>
            <person name="Pamphile W."/>
            <person name="Crosby M."/>
            <person name="Shen M."/>
            <person name="Vamathevan J.J."/>
            <person name="Lam P."/>
            <person name="McDonald L.A."/>
            <person name="Utterback T.R."/>
            <person name="Zalewski C."/>
            <person name="Makarova K.S."/>
            <person name="Aravind L."/>
            <person name="Daly M.J."/>
            <person name="Minton K.W."/>
            <person name="Fleischmann R.D."/>
            <person name="Ketchum K.A."/>
            <person name="Nelson K.E."/>
            <person name="Salzberg S.L."/>
            <person name="Smith H.O."/>
            <person name="Venter J.C."/>
            <person name="Fraser C.M."/>
        </authorList>
    </citation>
    <scope>NUCLEOTIDE SEQUENCE [LARGE SCALE GENOMIC DNA]</scope>
    <source>
        <strain>ATCC 13939 / DSM 20539 / JCM 16871 / CCUG 27074 / LMG 4051 / NBRC 15346 / NCIMB 9279 / VKM B-1422 / R1</strain>
    </source>
</reference>
<sequence>MLRSPYSGGHLEVVVGPMFSGKSEELIRRLTRSLIARQRVAVFKPAIDNRYHASEVASHAGRTLEAVAVPDAQAIRAQLSGQGELLSAAPEGVDVIGIDEAQFFGPELVPLVLELADAGVRVVLAGLDLDFRAEPFGSMPELLARAESVDKLTAICTVCGAPATRTQRLIGGQPARFDDPVVLVGAQESYEALPRAPHRAQGGVTTPSPLAS</sequence>
<feature type="chain" id="PRO_0000174970" description="Thymidine kinase">
    <location>
        <begin position="1"/>
        <end position="212"/>
    </location>
</feature>
<feature type="active site" description="Proton acceptor" evidence="1">
    <location>
        <position position="100"/>
    </location>
</feature>
<feature type="binding site" evidence="1">
    <location>
        <begin position="16"/>
        <end position="23"/>
    </location>
    <ligand>
        <name>ATP</name>
        <dbReference type="ChEBI" id="CHEBI:30616"/>
    </ligand>
</feature>
<feature type="binding site" evidence="1">
    <location>
        <begin position="99"/>
        <end position="102"/>
    </location>
    <ligand>
        <name>ATP</name>
        <dbReference type="ChEBI" id="CHEBI:30616"/>
    </ligand>
</feature>
<evidence type="ECO:0000255" key="1">
    <source>
        <dbReference type="HAMAP-Rule" id="MF_00124"/>
    </source>
</evidence>
<keyword id="KW-0067">ATP-binding</keyword>
<keyword id="KW-0963">Cytoplasm</keyword>
<keyword id="KW-0237">DNA synthesis</keyword>
<keyword id="KW-0418">Kinase</keyword>
<keyword id="KW-0547">Nucleotide-binding</keyword>
<keyword id="KW-1185">Reference proteome</keyword>
<keyword id="KW-0808">Transferase</keyword>
<accession>Q9RSY5</accession>
<gene>
    <name evidence="1" type="primary">tdk</name>
    <name type="ordered locus">DR_1984</name>
</gene>